<evidence type="ECO:0000255" key="1">
    <source>
        <dbReference type="HAMAP-Rule" id="MF_00096"/>
    </source>
</evidence>
<name>MUTS_ACHLI</name>
<keyword id="KW-0067">ATP-binding</keyword>
<keyword id="KW-0227">DNA damage</keyword>
<keyword id="KW-0234">DNA repair</keyword>
<keyword id="KW-0238">DNA-binding</keyword>
<keyword id="KW-0547">Nucleotide-binding</keyword>
<keyword id="KW-1185">Reference proteome</keyword>
<protein>
    <recommendedName>
        <fullName evidence="1">DNA mismatch repair protein MutS</fullName>
    </recommendedName>
</protein>
<dbReference type="EMBL" id="CP000896">
    <property type="protein sequence ID" value="ABX81496.1"/>
    <property type="molecule type" value="Genomic_DNA"/>
</dbReference>
<dbReference type="RefSeq" id="WP_012242827.1">
    <property type="nucleotide sequence ID" value="NC_010163.1"/>
</dbReference>
<dbReference type="SMR" id="A9NGL6"/>
<dbReference type="STRING" id="441768.ACL_0883"/>
<dbReference type="GeneID" id="41339036"/>
<dbReference type="KEGG" id="acl:ACL_0883"/>
<dbReference type="eggNOG" id="COG0249">
    <property type="taxonomic scope" value="Bacteria"/>
</dbReference>
<dbReference type="HOGENOM" id="CLU_002472_3_1_14"/>
<dbReference type="OrthoDB" id="9802448at2"/>
<dbReference type="Proteomes" id="UP000008558">
    <property type="component" value="Chromosome"/>
</dbReference>
<dbReference type="GO" id="GO:0005829">
    <property type="term" value="C:cytosol"/>
    <property type="evidence" value="ECO:0007669"/>
    <property type="project" value="TreeGrafter"/>
</dbReference>
<dbReference type="GO" id="GO:0005524">
    <property type="term" value="F:ATP binding"/>
    <property type="evidence" value="ECO:0007669"/>
    <property type="project" value="UniProtKB-UniRule"/>
</dbReference>
<dbReference type="GO" id="GO:0140664">
    <property type="term" value="F:ATP-dependent DNA damage sensor activity"/>
    <property type="evidence" value="ECO:0007669"/>
    <property type="project" value="InterPro"/>
</dbReference>
<dbReference type="GO" id="GO:0003684">
    <property type="term" value="F:damaged DNA binding"/>
    <property type="evidence" value="ECO:0007669"/>
    <property type="project" value="UniProtKB-UniRule"/>
</dbReference>
<dbReference type="GO" id="GO:0030983">
    <property type="term" value="F:mismatched DNA binding"/>
    <property type="evidence" value="ECO:0007669"/>
    <property type="project" value="InterPro"/>
</dbReference>
<dbReference type="GO" id="GO:0006298">
    <property type="term" value="P:mismatch repair"/>
    <property type="evidence" value="ECO:0007669"/>
    <property type="project" value="UniProtKB-UniRule"/>
</dbReference>
<dbReference type="FunFam" id="3.40.1170.10:FF:000001">
    <property type="entry name" value="DNA mismatch repair protein MutS"/>
    <property type="match status" value="1"/>
</dbReference>
<dbReference type="Gene3D" id="1.10.1420.10">
    <property type="match status" value="2"/>
</dbReference>
<dbReference type="Gene3D" id="3.40.1170.10">
    <property type="entry name" value="DNA repair protein MutS, domain I"/>
    <property type="match status" value="1"/>
</dbReference>
<dbReference type="Gene3D" id="3.30.420.110">
    <property type="entry name" value="MutS, connector domain"/>
    <property type="match status" value="1"/>
</dbReference>
<dbReference type="Gene3D" id="3.40.50.300">
    <property type="entry name" value="P-loop containing nucleotide triphosphate hydrolases"/>
    <property type="match status" value="1"/>
</dbReference>
<dbReference type="HAMAP" id="MF_00096">
    <property type="entry name" value="MutS"/>
    <property type="match status" value="1"/>
</dbReference>
<dbReference type="InterPro" id="IPR005748">
    <property type="entry name" value="DNA_mismatch_repair_MutS"/>
</dbReference>
<dbReference type="InterPro" id="IPR007695">
    <property type="entry name" value="DNA_mismatch_repair_MutS-lik_N"/>
</dbReference>
<dbReference type="InterPro" id="IPR017261">
    <property type="entry name" value="DNA_mismatch_repair_MutS/MSH"/>
</dbReference>
<dbReference type="InterPro" id="IPR000432">
    <property type="entry name" value="DNA_mismatch_repair_MutS_C"/>
</dbReference>
<dbReference type="InterPro" id="IPR007861">
    <property type="entry name" value="DNA_mismatch_repair_MutS_clamp"/>
</dbReference>
<dbReference type="InterPro" id="IPR007696">
    <property type="entry name" value="DNA_mismatch_repair_MutS_core"/>
</dbReference>
<dbReference type="InterPro" id="IPR016151">
    <property type="entry name" value="DNA_mismatch_repair_MutS_N"/>
</dbReference>
<dbReference type="InterPro" id="IPR036187">
    <property type="entry name" value="DNA_mismatch_repair_MutS_sf"/>
</dbReference>
<dbReference type="InterPro" id="IPR045076">
    <property type="entry name" value="MutS"/>
</dbReference>
<dbReference type="InterPro" id="IPR036678">
    <property type="entry name" value="MutS_con_dom_sf"/>
</dbReference>
<dbReference type="InterPro" id="IPR027417">
    <property type="entry name" value="P-loop_NTPase"/>
</dbReference>
<dbReference type="NCBIfam" id="TIGR01070">
    <property type="entry name" value="mutS1"/>
    <property type="match status" value="1"/>
</dbReference>
<dbReference type="NCBIfam" id="NF003810">
    <property type="entry name" value="PRK05399.1"/>
    <property type="match status" value="1"/>
</dbReference>
<dbReference type="PANTHER" id="PTHR11361:SF34">
    <property type="entry name" value="DNA MISMATCH REPAIR PROTEIN MSH1, MITOCHONDRIAL"/>
    <property type="match status" value="1"/>
</dbReference>
<dbReference type="PANTHER" id="PTHR11361">
    <property type="entry name" value="DNA MISMATCH REPAIR PROTEIN MUTS FAMILY MEMBER"/>
    <property type="match status" value="1"/>
</dbReference>
<dbReference type="Pfam" id="PF01624">
    <property type="entry name" value="MutS_I"/>
    <property type="match status" value="1"/>
</dbReference>
<dbReference type="Pfam" id="PF05192">
    <property type="entry name" value="MutS_III"/>
    <property type="match status" value="1"/>
</dbReference>
<dbReference type="Pfam" id="PF05190">
    <property type="entry name" value="MutS_IV"/>
    <property type="match status" value="1"/>
</dbReference>
<dbReference type="Pfam" id="PF00488">
    <property type="entry name" value="MutS_V"/>
    <property type="match status" value="1"/>
</dbReference>
<dbReference type="PIRSF" id="PIRSF037677">
    <property type="entry name" value="DNA_mis_repair_Msh6"/>
    <property type="match status" value="1"/>
</dbReference>
<dbReference type="SMART" id="SM00534">
    <property type="entry name" value="MUTSac"/>
    <property type="match status" value="1"/>
</dbReference>
<dbReference type="SMART" id="SM00533">
    <property type="entry name" value="MUTSd"/>
    <property type="match status" value="1"/>
</dbReference>
<dbReference type="SUPFAM" id="SSF55271">
    <property type="entry name" value="DNA repair protein MutS, domain I"/>
    <property type="match status" value="1"/>
</dbReference>
<dbReference type="SUPFAM" id="SSF53150">
    <property type="entry name" value="DNA repair protein MutS, domain II"/>
    <property type="match status" value="1"/>
</dbReference>
<dbReference type="SUPFAM" id="SSF48334">
    <property type="entry name" value="DNA repair protein MutS, domain III"/>
    <property type="match status" value="1"/>
</dbReference>
<dbReference type="SUPFAM" id="SSF52540">
    <property type="entry name" value="P-loop containing nucleoside triphosphate hydrolases"/>
    <property type="match status" value="1"/>
</dbReference>
<dbReference type="PROSITE" id="PS00486">
    <property type="entry name" value="DNA_MISMATCH_REPAIR_2"/>
    <property type="match status" value="1"/>
</dbReference>
<proteinExistence type="inferred from homology"/>
<organism>
    <name type="scientific">Acholeplasma laidlawii (strain PG-8A)</name>
    <dbReference type="NCBI Taxonomy" id="441768"/>
    <lineage>
        <taxon>Bacteria</taxon>
        <taxon>Bacillati</taxon>
        <taxon>Mycoplasmatota</taxon>
        <taxon>Mollicutes</taxon>
        <taxon>Acholeplasmatales</taxon>
        <taxon>Acholeplasmataceae</taxon>
        <taxon>Acholeplasma</taxon>
    </lineage>
</organism>
<sequence>MSDISKYTPMMQQYLKIKEDYADAIVFFRLGDFYEMFFDDAITASKVLEITLTKKEAGQTVPMCGVPHHAAKVYIQKLITKGFKIAIVEQTSEPGKGLVEREVVQLITPGMIIDDDILPKNEYNFIGSVSLSEYGYILSYADISTGDTFILNGLTKQALTDEVSNLKLKEIVLTNTSDIYLLNFFKQESILVSIYTNQEVQNTRIVRNLKEKHLKEAGSLLINYLEKESKLDLSHLMPFESVIVDQYMRLDHQVLNHLELTESLTGNINSTLIQWIDKTSTAMGSRLLRYELTHPLKDKELLEKRYDYIEAFTQFEPRNKLESILEQVYDLNRLVGRVSSNQTHARDLVQLKTTLSLIPEFKEVLDSFDNPLIDEMNDKVDVFETLFQLLDASIENEPPLTVKEGGIIKDGYDETLDEFRSIAKNGDLWLEKFENEEKERTGIKNLKVGYNRVFGYFIEVSKGNIPLIQEEFGYIRKQTLANAERYITEDLKNAENKILSSKDRADKLEYEIFNQIKETAKTYTHELQLLSQIIASVDKYISLSKVAEMYKYVRPKLNHNRIVDIENGRHPVVEQHVEFIKNHIHMKPSEIFILTGPNMSGKSTYMRMFAVITVMAQTGMFVPATSANLPIYDAIFTRIGSSDDISGGKSTFMVEMVEANDALTYATENSLILFDEIGRGTATYDGLALAQAMIEYVHTQIKAQMMFSTHYHELTKLSEKHDLITNLHVKAIEQKDHMVFLHQVELGSSDKSYGIQVAALAHLPDPVIKRAKYLLKKLEKDGKGIDHNLFMFEEKVELGQIIPHDIQDLLNHINDLDINQMTPLDALIKLKYLQSLSKEKK</sequence>
<reference key="1">
    <citation type="journal article" date="2011" name="J. Bacteriol.">
        <title>Complete genome and proteome of Acholeplasma laidlawii.</title>
        <authorList>
            <person name="Lazarev V.N."/>
            <person name="Levitskii S.A."/>
            <person name="Basovskii Y.I."/>
            <person name="Chukin M.M."/>
            <person name="Akopian T.A."/>
            <person name="Vereshchagin V.V."/>
            <person name="Kostrjukova E.S."/>
            <person name="Kovaleva G.Y."/>
            <person name="Kazanov M.D."/>
            <person name="Malko D.B."/>
            <person name="Vitreschak A.G."/>
            <person name="Sernova N.V."/>
            <person name="Gelfand M.S."/>
            <person name="Demina I.A."/>
            <person name="Serebryakova M.V."/>
            <person name="Galyamina M.A."/>
            <person name="Vtyurin N.N."/>
            <person name="Rogov S.I."/>
            <person name="Alexeev D.G."/>
            <person name="Ladygina V.G."/>
            <person name="Govorun V.M."/>
        </authorList>
    </citation>
    <scope>NUCLEOTIDE SEQUENCE [LARGE SCALE GENOMIC DNA]</scope>
    <source>
        <strain>PG-8A</strain>
    </source>
</reference>
<feature type="chain" id="PRO_1000075550" description="DNA mismatch repair protein MutS">
    <location>
        <begin position="1"/>
        <end position="841"/>
    </location>
</feature>
<feature type="binding site" evidence="1">
    <location>
        <begin position="596"/>
        <end position="603"/>
    </location>
    <ligand>
        <name>ATP</name>
        <dbReference type="ChEBI" id="CHEBI:30616"/>
    </ligand>
</feature>
<gene>
    <name evidence="1" type="primary">mutS</name>
    <name type="ordered locus">ACL_0883</name>
</gene>
<accession>A9NGL6</accession>
<comment type="function">
    <text evidence="1">This protein is involved in the repair of mismatches in DNA. It is possible that it carries out the mismatch recognition step. This protein has a weak ATPase activity.</text>
</comment>
<comment type="similarity">
    <text evidence="1">Belongs to the DNA mismatch repair MutS family.</text>
</comment>